<sequence length="154" mass="17909">METIKALEKFMEFDRLQKDCSDKLDREKERRMKAEREIARKNCGGNPCERELESERSNVKRLEYQLDAEKEKVKFYKRELERDRYLSSRYLTSSSDPHEKPLPNYTFPRIKNVSPLTTEATGSVEVAPPSTDVTEPISDVTPSVDVEPEHPPAF</sequence>
<dbReference type="EMBL" id="AY243312">
    <property type="protein sequence ID" value="AAO89425.1"/>
    <property type="molecule type" value="Genomic_DNA"/>
</dbReference>
<dbReference type="RefSeq" id="YP_233028.1">
    <property type="nucleotide sequence ID" value="NC_006998.1"/>
</dbReference>
<dbReference type="SMR" id="Q80HV0"/>
<dbReference type="DNASU" id="3707676"/>
<dbReference type="GeneID" id="3707676"/>
<dbReference type="KEGG" id="vg:3707676"/>
<dbReference type="Proteomes" id="UP000000344">
    <property type="component" value="Genome"/>
</dbReference>
<protein>
    <recommendedName>
        <fullName>17 kDa A-type inclusion protein</fullName>
    </recommendedName>
</protein>
<organismHost>
    <name type="scientific">Bos taurus</name>
    <name type="common">Bovine</name>
    <dbReference type="NCBI Taxonomy" id="9913"/>
</organismHost>
<gene>
    <name type="ordered locus">VACWR146</name>
</gene>
<accession>Q80HV0</accession>
<feature type="chain" id="PRO_0000418525" description="17 kDa A-type inclusion protein">
    <location>
        <begin position="1"/>
        <end position="154"/>
    </location>
</feature>
<feature type="region of interest" description="Disordered" evidence="2">
    <location>
        <begin position="88"/>
        <end position="154"/>
    </location>
</feature>
<feature type="coiled-coil region" evidence="1">
    <location>
        <begin position="17"/>
        <end position="85"/>
    </location>
</feature>
<proteinExistence type="predicted"/>
<organism>
    <name type="scientific">Vaccinia virus (strain Western Reserve)</name>
    <name type="common">VACV</name>
    <name type="synonym">Vaccinia virus (strain WR)</name>
    <dbReference type="NCBI Taxonomy" id="10254"/>
    <lineage>
        <taxon>Viruses</taxon>
        <taxon>Varidnaviria</taxon>
        <taxon>Bamfordvirae</taxon>
        <taxon>Nucleocytoviricota</taxon>
        <taxon>Pokkesviricetes</taxon>
        <taxon>Chitovirales</taxon>
        <taxon>Poxviridae</taxon>
        <taxon>Chordopoxvirinae</taxon>
        <taxon>Orthopoxvirus</taxon>
        <taxon>Vaccinia virus</taxon>
    </lineage>
</organism>
<keyword id="KW-0175">Coiled coil</keyword>
<keyword id="KW-1185">Reference proteome</keyword>
<reference key="1">
    <citation type="submission" date="2003-02" db="EMBL/GenBank/DDBJ databases">
        <title>Sequencing of the coding region of Vaccinia-WR to an average 9-fold redundancy and an error rate of 0.16/10kb.</title>
        <authorList>
            <person name="Esposito J.J."/>
            <person name="Frace A.M."/>
            <person name="Sammons S.A."/>
            <person name="Olsen-Rasmussen M."/>
            <person name="Osborne J."/>
            <person name="Wohlhueter R."/>
        </authorList>
    </citation>
    <scope>NUCLEOTIDE SEQUENCE [LARGE SCALE GENOMIC DNA]</scope>
</reference>
<name>ATI2_VACCW</name>
<evidence type="ECO:0000255" key="1"/>
<evidence type="ECO:0000256" key="2">
    <source>
        <dbReference type="SAM" id="MobiDB-lite"/>
    </source>
</evidence>